<name>SYL_HELMI</name>
<dbReference type="EC" id="6.1.1.4" evidence="1"/>
<dbReference type="EMBL" id="CP000930">
    <property type="protein sequence ID" value="ABZ85206.1"/>
    <property type="molecule type" value="Genomic_DNA"/>
</dbReference>
<dbReference type="RefSeq" id="WP_012283691.1">
    <property type="nucleotide sequence ID" value="NC_010337.2"/>
</dbReference>
<dbReference type="SMR" id="B0TBJ3"/>
<dbReference type="STRING" id="498761.HM1_2677"/>
<dbReference type="KEGG" id="hmo:HM1_2677"/>
<dbReference type="eggNOG" id="COG0495">
    <property type="taxonomic scope" value="Bacteria"/>
</dbReference>
<dbReference type="HOGENOM" id="CLU_004427_0_0_9"/>
<dbReference type="OrthoDB" id="9810365at2"/>
<dbReference type="Proteomes" id="UP000008550">
    <property type="component" value="Chromosome"/>
</dbReference>
<dbReference type="GO" id="GO:0005829">
    <property type="term" value="C:cytosol"/>
    <property type="evidence" value="ECO:0007669"/>
    <property type="project" value="TreeGrafter"/>
</dbReference>
<dbReference type="GO" id="GO:0002161">
    <property type="term" value="F:aminoacyl-tRNA deacylase activity"/>
    <property type="evidence" value="ECO:0007669"/>
    <property type="project" value="InterPro"/>
</dbReference>
<dbReference type="GO" id="GO:0005524">
    <property type="term" value="F:ATP binding"/>
    <property type="evidence" value="ECO:0007669"/>
    <property type="project" value="UniProtKB-UniRule"/>
</dbReference>
<dbReference type="GO" id="GO:0004823">
    <property type="term" value="F:leucine-tRNA ligase activity"/>
    <property type="evidence" value="ECO:0007669"/>
    <property type="project" value="UniProtKB-UniRule"/>
</dbReference>
<dbReference type="GO" id="GO:0006429">
    <property type="term" value="P:leucyl-tRNA aminoacylation"/>
    <property type="evidence" value="ECO:0007669"/>
    <property type="project" value="UniProtKB-UniRule"/>
</dbReference>
<dbReference type="CDD" id="cd07958">
    <property type="entry name" value="Anticodon_Ia_Leu_BEm"/>
    <property type="match status" value="1"/>
</dbReference>
<dbReference type="CDD" id="cd00812">
    <property type="entry name" value="LeuRS_core"/>
    <property type="match status" value="1"/>
</dbReference>
<dbReference type="FunFam" id="3.40.50.620:FF:000003">
    <property type="entry name" value="Leucine--tRNA ligase"/>
    <property type="match status" value="1"/>
</dbReference>
<dbReference type="FunFam" id="3.40.50.620:FF:000056">
    <property type="entry name" value="Leucine--tRNA ligase"/>
    <property type="match status" value="1"/>
</dbReference>
<dbReference type="FunFam" id="1.10.730.10:FF:000011">
    <property type="entry name" value="Leucine--tRNA ligase chloroplastic/mitochondrial"/>
    <property type="match status" value="1"/>
</dbReference>
<dbReference type="Gene3D" id="3.10.20.590">
    <property type="match status" value="1"/>
</dbReference>
<dbReference type="Gene3D" id="3.40.50.620">
    <property type="entry name" value="HUPs"/>
    <property type="match status" value="2"/>
</dbReference>
<dbReference type="Gene3D" id="1.10.730.10">
    <property type="entry name" value="Isoleucyl-tRNA Synthetase, Domain 1"/>
    <property type="match status" value="1"/>
</dbReference>
<dbReference type="HAMAP" id="MF_00049_B">
    <property type="entry name" value="Leu_tRNA_synth_B"/>
    <property type="match status" value="1"/>
</dbReference>
<dbReference type="InterPro" id="IPR001412">
    <property type="entry name" value="aa-tRNA-synth_I_CS"/>
</dbReference>
<dbReference type="InterPro" id="IPR002300">
    <property type="entry name" value="aa-tRNA-synth_Ia"/>
</dbReference>
<dbReference type="InterPro" id="IPR002302">
    <property type="entry name" value="Leu-tRNA-ligase"/>
</dbReference>
<dbReference type="InterPro" id="IPR025709">
    <property type="entry name" value="Leu_tRNA-synth_edit"/>
</dbReference>
<dbReference type="InterPro" id="IPR013155">
    <property type="entry name" value="M/V/L/I-tRNA-synth_anticd-bd"/>
</dbReference>
<dbReference type="InterPro" id="IPR015413">
    <property type="entry name" value="Methionyl/Leucyl_tRNA_Synth"/>
</dbReference>
<dbReference type="InterPro" id="IPR014729">
    <property type="entry name" value="Rossmann-like_a/b/a_fold"/>
</dbReference>
<dbReference type="InterPro" id="IPR009080">
    <property type="entry name" value="tRNAsynth_Ia_anticodon-bd"/>
</dbReference>
<dbReference type="InterPro" id="IPR009008">
    <property type="entry name" value="Val/Leu/Ile-tRNA-synth_edit"/>
</dbReference>
<dbReference type="NCBIfam" id="TIGR00396">
    <property type="entry name" value="leuS_bact"/>
    <property type="match status" value="1"/>
</dbReference>
<dbReference type="PANTHER" id="PTHR43740:SF2">
    <property type="entry name" value="LEUCINE--TRNA LIGASE, MITOCHONDRIAL"/>
    <property type="match status" value="1"/>
</dbReference>
<dbReference type="PANTHER" id="PTHR43740">
    <property type="entry name" value="LEUCYL-TRNA SYNTHETASE"/>
    <property type="match status" value="1"/>
</dbReference>
<dbReference type="Pfam" id="PF08264">
    <property type="entry name" value="Anticodon_1"/>
    <property type="match status" value="1"/>
</dbReference>
<dbReference type="Pfam" id="PF00133">
    <property type="entry name" value="tRNA-synt_1"/>
    <property type="match status" value="1"/>
</dbReference>
<dbReference type="Pfam" id="PF13603">
    <property type="entry name" value="tRNA-synt_1_2"/>
    <property type="match status" value="1"/>
</dbReference>
<dbReference type="Pfam" id="PF09334">
    <property type="entry name" value="tRNA-synt_1g"/>
    <property type="match status" value="1"/>
</dbReference>
<dbReference type="PRINTS" id="PR00985">
    <property type="entry name" value="TRNASYNTHLEU"/>
</dbReference>
<dbReference type="SUPFAM" id="SSF47323">
    <property type="entry name" value="Anticodon-binding domain of a subclass of class I aminoacyl-tRNA synthetases"/>
    <property type="match status" value="1"/>
</dbReference>
<dbReference type="SUPFAM" id="SSF52374">
    <property type="entry name" value="Nucleotidylyl transferase"/>
    <property type="match status" value="1"/>
</dbReference>
<dbReference type="SUPFAM" id="SSF50677">
    <property type="entry name" value="ValRS/IleRS/LeuRS editing domain"/>
    <property type="match status" value="1"/>
</dbReference>
<dbReference type="PROSITE" id="PS00178">
    <property type="entry name" value="AA_TRNA_LIGASE_I"/>
    <property type="match status" value="1"/>
</dbReference>
<accession>B0TBJ3</accession>
<keyword id="KW-0030">Aminoacyl-tRNA synthetase</keyword>
<keyword id="KW-0067">ATP-binding</keyword>
<keyword id="KW-0963">Cytoplasm</keyword>
<keyword id="KW-0436">Ligase</keyword>
<keyword id="KW-0547">Nucleotide-binding</keyword>
<keyword id="KW-0648">Protein biosynthesis</keyword>
<keyword id="KW-1185">Reference proteome</keyword>
<proteinExistence type="inferred from homology"/>
<protein>
    <recommendedName>
        <fullName evidence="1">Leucine--tRNA ligase</fullName>
        <ecNumber evidence="1">6.1.1.4</ecNumber>
    </recommendedName>
    <alternativeName>
        <fullName evidence="1">Leucyl-tRNA synthetase</fullName>
        <shortName evidence="1">LeuRS</shortName>
    </alternativeName>
</protein>
<evidence type="ECO:0000255" key="1">
    <source>
        <dbReference type="HAMAP-Rule" id="MF_00049"/>
    </source>
</evidence>
<sequence>MQERYDYQQIEKKWQKYWADTGMFRLQQEEGRPKYYCLEMFPYPSGNLHMGHVRVYSIGDVVARFKTMQGYNVLHPMGWDAFGLPAENAAIKHKVPPADWTWSNIANMRRQLQSMGISYDWEREVATCHPDYYKWTQWLFLQLYKAGLAYKKKANVNWCPDCATVLANEQVVDGLCERCDATVEKKALEQWFFRITDYAQRLLDDLNKLPGWPDKVKTMQENWIGRSEGVEADFALENPVGGVDKLTVYTTRQDTIFGVTYMVLAPEHPAVEALVSGNPREAELRAFIKKVLSQSEIDRTANDTEKEGIFTGHYCINPLTGEKVAVYLANYVLVDYGTGAVMGVPAHDQRDFEFATKYNIPMKVVIQPEGLPDLDVEEMDHAYEGEGRLVNSGEFDGLINTQALDVIADKLEREGKGVRKVNYRLRDWLISRQRYWGAPIPVIYCEKCGEVAVPDEQLPVMLPTDVAFTPSGESPLTSRPDFYECTCPRCGGKGRRETDTMDTFVCSSWYFLRYCTPKDKDHAFLQEDVDYWMNVDQYIGGVEHAILHLMYARFFTKVLYDLKLVKVEEPFENLLTQGMVLMGGSKMSKSKGNTVSPEEIIAKYGADTARLFILFAAPPERDLEWSDRGVEGAHRFLHRLWRLVYAYSDQIASVPGTMVGYGKGQPNGSKGDNLFSLNSDDRELVRVAHYTVKKVTEDIGQRFNFNTAVSAIMEMVNYFYQYKDKVPAEQQNIPLVKDALARLVLVLAPFAPHICEELWQVIGGGESVYKQPWPTYDEQALVRDEVEVVVQINGKVREKLRVANGLDGEAIKAKVLEMDKVQALIAGKSVVKLITVPNKLVNIVVK</sequence>
<feature type="chain" id="PRO_1000091322" description="Leucine--tRNA ligase">
    <location>
        <begin position="1"/>
        <end position="846"/>
    </location>
</feature>
<feature type="short sequence motif" description="'HIGH' region">
    <location>
        <begin position="42"/>
        <end position="52"/>
    </location>
</feature>
<feature type="short sequence motif" description="'KMSKS' region">
    <location>
        <begin position="586"/>
        <end position="590"/>
    </location>
</feature>
<feature type="binding site" evidence="1">
    <location>
        <position position="589"/>
    </location>
    <ligand>
        <name>ATP</name>
        <dbReference type="ChEBI" id="CHEBI:30616"/>
    </ligand>
</feature>
<reference key="1">
    <citation type="journal article" date="2008" name="J. Bacteriol.">
        <title>The genome of Heliobacterium modesticaldum, a phototrophic representative of the Firmicutes containing the simplest photosynthetic apparatus.</title>
        <authorList>
            <person name="Sattley W.M."/>
            <person name="Madigan M.T."/>
            <person name="Swingley W.D."/>
            <person name="Cheung P.C."/>
            <person name="Clocksin K.M."/>
            <person name="Conrad A.L."/>
            <person name="Dejesa L.C."/>
            <person name="Honchak B.M."/>
            <person name="Jung D.O."/>
            <person name="Karbach L.E."/>
            <person name="Kurdoglu A."/>
            <person name="Lahiri S."/>
            <person name="Mastrian S.D."/>
            <person name="Page L.E."/>
            <person name="Taylor H.L."/>
            <person name="Wang Z.T."/>
            <person name="Raymond J."/>
            <person name="Chen M."/>
            <person name="Blankenship R.E."/>
            <person name="Touchman J.W."/>
        </authorList>
    </citation>
    <scope>NUCLEOTIDE SEQUENCE [LARGE SCALE GENOMIC DNA]</scope>
    <source>
        <strain>ATCC 51547 / Ice1</strain>
    </source>
</reference>
<organism>
    <name type="scientific">Heliobacterium modesticaldum (strain ATCC 51547 / Ice1)</name>
    <dbReference type="NCBI Taxonomy" id="498761"/>
    <lineage>
        <taxon>Bacteria</taxon>
        <taxon>Bacillati</taxon>
        <taxon>Bacillota</taxon>
        <taxon>Clostridia</taxon>
        <taxon>Eubacteriales</taxon>
        <taxon>Heliobacteriaceae</taxon>
        <taxon>Heliomicrobium</taxon>
    </lineage>
</organism>
<comment type="catalytic activity">
    <reaction evidence="1">
        <text>tRNA(Leu) + L-leucine + ATP = L-leucyl-tRNA(Leu) + AMP + diphosphate</text>
        <dbReference type="Rhea" id="RHEA:11688"/>
        <dbReference type="Rhea" id="RHEA-COMP:9613"/>
        <dbReference type="Rhea" id="RHEA-COMP:9622"/>
        <dbReference type="ChEBI" id="CHEBI:30616"/>
        <dbReference type="ChEBI" id="CHEBI:33019"/>
        <dbReference type="ChEBI" id="CHEBI:57427"/>
        <dbReference type="ChEBI" id="CHEBI:78442"/>
        <dbReference type="ChEBI" id="CHEBI:78494"/>
        <dbReference type="ChEBI" id="CHEBI:456215"/>
        <dbReference type="EC" id="6.1.1.4"/>
    </reaction>
</comment>
<comment type="subcellular location">
    <subcellularLocation>
        <location evidence="1">Cytoplasm</location>
    </subcellularLocation>
</comment>
<comment type="similarity">
    <text evidence="1">Belongs to the class-I aminoacyl-tRNA synthetase family.</text>
</comment>
<gene>
    <name evidence="1" type="primary">leuS</name>
    <name type="ordered locus">Helmi_25810</name>
    <name type="ORF">HM1_2677</name>
</gene>